<organism>
    <name type="scientific">Corynebacterium glutamicum (strain R)</name>
    <dbReference type="NCBI Taxonomy" id="340322"/>
    <lineage>
        <taxon>Bacteria</taxon>
        <taxon>Bacillati</taxon>
        <taxon>Actinomycetota</taxon>
        <taxon>Actinomycetes</taxon>
        <taxon>Mycobacteriales</taxon>
        <taxon>Corynebacteriaceae</taxon>
        <taxon>Corynebacterium</taxon>
    </lineage>
</organism>
<dbReference type="EC" id="6.3.5.-" evidence="1"/>
<dbReference type="EMBL" id="AP009044">
    <property type="protein sequence ID" value="BAF54304.1"/>
    <property type="molecule type" value="Genomic_DNA"/>
</dbReference>
<dbReference type="RefSeq" id="WP_003854761.1">
    <property type="nucleotide sequence ID" value="NC_009342.1"/>
</dbReference>
<dbReference type="SMR" id="A4QDK7"/>
<dbReference type="GeneID" id="1019228"/>
<dbReference type="KEGG" id="cgt:cgR_1323"/>
<dbReference type="HOGENOM" id="CLU_105899_1_0_11"/>
<dbReference type="PhylomeDB" id="A4QDK7"/>
<dbReference type="Proteomes" id="UP000006698">
    <property type="component" value="Chromosome"/>
</dbReference>
<dbReference type="GO" id="GO:0050566">
    <property type="term" value="F:asparaginyl-tRNA synthase (glutamine-hydrolyzing) activity"/>
    <property type="evidence" value="ECO:0007669"/>
    <property type="project" value="RHEA"/>
</dbReference>
<dbReference type="GO" id="GO:0005524">
    <property type="term" value="F:ATP binding"/>
    <property type="evidence" value="ECO:0007669"/>
    <property type="project" value="UniProtKB-KW"/>
</dbReference>
<dbReference type="GO" id="GO:0050567">
    <property type="term" value="F:glutaminyl-tRNA synthase (glutamine-hydrolyzing) activity"/>
    <property type="evidence" value="ECO:0007669"/>
    <property type="project" value="UniProtKB-UniRule"/>
</dbReference>
<dbReference type="GO" id="GO:0070681">
    <property type="term" value="P:glutaminyl-tRNAGln biosynthesis via transamidation"/>
    <property type="evidence" value="ECO:0007669"/>
    <property type="project" value="TreeGrafter"/>
</dbReference>
<dbReference type="GO" id="GO:0006450">
    <property type="term" value="P:regulation of translational fidelity"/>
    <property type="evidence" value="ECO:0007669"/>
    <property type="project" value="InterPro"/>
</dbReference>
<dbReference type="GO" id="GO:0006412">
    <property type="term" value="P:translation"/>
    <property type="evidence" value="ECO:0007669"/>
    <property type="project" value="UniProtKB-UniRule"/>
</dbReference>
<dbReference type="Gene3D" id="1.10.20.60">
    <property type="entry name" value="Glu-tRNAGln amidotransferase C subunit, N-terminal domain"/>
    <property type="match status" value="1"/>
</dbReference>
<dbReference type="HAMAP" id="MF_00122">
    <property type="entry name" value="GatC"/>
    <property type="match status" value="1"/>
</dbReference>
<dbReference type="InterPro" id="IPR036113">
    <property type="entry name" value="Asp/Glu-ADT_sf_sub_c"/>
</dbReference>
<dbReference type="InterPro" id="IPR003837">
    <property type="entry name" value="GatC"/>
</dbReference>
<dbReference type="NCBIfam" id="TIGR00135">
    <property type="entry name" value="gatC"/>
    <property type="match status" value="1"/>
</dbReference>
<dbReference type="PANTHER" id="PTHR15004">
    <property type="entry name" value="GLUTAMYL-TRNA(GLN) AMIDOTRANSFERASE SUBUNIT C, MITOCHONDRIAL"/>
    <property type="match status" value="1"/>
</dbReference>
<dbReference type="PANTHER" id="PTHR15004:SF0">
    <property type="entry name" value="GLUTAMYL-TRNA(GLN) AMIDOTRANSFERASE SUBUNIT C, MITOCHONDRIAL"/>
    <property type="match status" value="1"/>
</dbReference>
<dbReference type="Pfam" id="PF02686">
    <property type="entry name" value="GatC"/>
    <property type="match status" value="1"/>
</dbReference>
<dbReference type="SUPFAM" id="SSF141000">
    <property type="entry name" value="Glu-tRNAGln amidotransferase C subunit"/>
    <property type="match status" value="1"/>
</dbReference>
<reference key="1">
    <citation type="journal article" date="2007" name="Microbiology">
        <title>Comparative analysis of the Corynebacterium glutamicum group and complete genome sequence of strain R.</title>
        <authorList>
            <person name="Yukawa H."/>
            <person name="Omumasaba C.A."/>
            <person name="Nonaka H."/>
            <person name="Kos P."/>
            <person name="Okai N."/>
            <person name="Suzuki N."/>
            <person name="Suda M."/>
            <person name="Tsuge Y."/>
            <person name="Watanabe J."/>
            <person name="Ikeda Y."/>
            <person name="Vertes A.A."/>
            <person name="Inui M."/>
        </authorList>
    </citation>
    <scope>NUCLEOTIDE SEQUENCE [LARGE SCALE GENOMIC DNA]</scope>
    <source>
        <strain>R</strain>
    </source>
</reference>
<evidence type="ECO:0000255" key="1">
    <source>
        <dbReference type="HAMAP-Rule" id="MF_00122"/>
    </source>
</evidence>
<gene>
    <name evidence="1" type="primary">gatC</name>
    <name type="ordered locus">cgR_1323</name>
</gene>
<sequence length="99" mass="10636">MPEISRDQVAHLAKLSRLALTEEELEQFAGQIDDIVGYVSAVQNVDAAGVEPMSHPHSIATTMREDVVHKTLDAAAALDQAPAVEDGRFMVPQILGEGD</sequence>
<comment type="function">
    <text evidence="1">Allows the formation of correctly charged Asn-tRNA(Asn) or Gln-tRNA(Gln) through the transamidation of misacylated Asp-tRNA(Asn) or Glu-tRNA(Gln) in organisms which lack either or both of asparaginyl-tRNA or glutaminyl-tRNA synthetases. The reaction takes place in the presence of glutamine and ATP through an activated phospho-Asp-tRNA(Asn) or phospho-Glu-tRNA(Gln).</text>
</comment>
<comment type="catalytic activity">
    <reaction evidence="1">
        <text>L-glutamyl-tRNA(Gln) + L-glutamine + ATP + H2O = L-glutaminyl-tRNA(Gln) + L-glutamate + ADP + phosphate + H(+)</text>
        <dbReference type="Rhea" id="RHEA:17521"/>
        <dbReference type="Rhea" id="RHEA-COMP:9681"/>
        <dbReference type="Rhea" id="RHEA-COMP:9684"/>
        <dbReference type="ChEBI" id="CHEBI:15377"/>
        <dbReference type="ChEBI" id="CHEBI:15378"/>
        <dbReference type="ChEBI" id="CHEBI:29985"/>
        <dbReference type="ChEBI" id="CHEBI:30616"/>
        <dbReference type="ChEBI" id="CHEBI:43474"/>
        <dbReference type="ChEBI" id="CHEBI:58359"/>
        <dbReference type="ChEBI" id="CHEBI:78520"/>
        <dbReference type="ChEBI" id="CHEBI:78521"/>
        <dbReference type="ChEBI" id="CHEBI:456216"/>
    </reaction>
</comment>
<comment type="catalytic activity">
    <reaction evidence="1">
        <text>L-aspartyl-tRNA(Asn) + L-glutamine + ATP + H2O = L-asparaginyl-tRNA(Asn) + L-glutamate + ADP + phosphate + 2 H(+)</text>
        <dbReference type="Rhea" id="RHEA:14513"/>
        <dbReference type="Rhea" id="RHEA-COMP:9674"/>
        <dbReference type="Rhea" id="RHEA-COMP:9677"/>
        <dbReference type="ChEBI" id="CHEBI:15377"/>
        <dbReference type="ChEBI" id="CHEBI:15378"/>
        <dbReference type="ChEBI" id="CHEBI:29985"/>
        <dbReference type="ChEBI" id="CHEBI:30616"/>
        <dbReference type="ChEBI" id="CHEBI:43474"/>
        <dbReference type="ChEBI" id="CHEBI:58359"/>
        <dbReference type="ChEBI" id="CHEBI:78515"/>
        <dbReference type="ChEBI" id="CHEBI:78516"/>
        <dbReference type="ChEBI" id="CHEBI:456216"/>
    </reaction>
</comment>
<comment type="subunit">
    <text evidence="1">Heterotrimer of A, B and C subunits.</text>
</comment>
<comment type="similarity">
    <text evidence="1">Belongs to the GatC family.</text>
</comment>
<accession>A4QDK7</accession>
<name>GATC_CORGB</name>
<feature type="chain" id="PRO_1000016112" description="Aspartyl/glutamyl-tRNA(Asn/Gln) amidotransferase subunit C">
    <location>
        <begin position="1"/>
        <end position="99"/>
    </location>
</feature>
<protein>
    <recommendedName>
        <fullName evidence="1">Aspartyl/glutamyl-tRNA(Asn/Gln) amidotransferase subunit C</fullName>
        <shortName evidence="1">Asp/Glu-ADT subunit C</shortName>
        <ecNumber evidence="1">6.3.5.-</ecNumber>
    </recommendedName>
</protein>
<keyword id="KW-0067">ATP-binding</keyword>
<keyword id="KW-0436">Ligase</keyword>
<keyword id="KW-0547">Nucleotide-binding</keyword>
<keyword id="KW-0648">Protein biosynthesis</keyword>
<proteinExistence type="inferred from homology"/>